<dbReference type="EMBL" id="AK008613">
    <property type="protein sequence ID" value="BAB25778.1"/>
    <property type="molecule type" value="mRNA"/>
</dbReference>
<dbReference type="EMBL" id="AK008685">
    <property type="protein sequence ID" value="BAC25228.1"/>
    <property type="molecule type" value="mRNA"/>
</dbReference>
<dbReference type="EMBL" id="AL591125">
    <property type="status" value="NOT_ANNOTATED_CDS"/>
    <property type="molecule type" value="Genomic_DNA"/>
</dbReference>
<dbReference type="EMBL" id="BC109335">
    <property type="protein sequence ID" value="AAI09336.1"/>
    <property type="molecule type" value="mRNA"/>
</dbReference>
<dbReference type="EMBL" id="BC109336">
    <property type="protein sequence ID" value="AAI09337.1"/>
    <property type="molecule type" value="mRNA"/>
</dbReference>
<dbReference type="CCDS" id="CCDS36301.1">
    <molecule id="Q32M21-1"/>
</dbReference>
<dbReference type="CCDS" id="CCDS88246.1">
    <molecule id="Q32M21-2"/>
</dbReference>
<dbReference type="RefSeq" id="NP_001350149.1">
    <molecule id="Q32M21-1"/>
    <property type="nucleotide sequence ID" value="NM_001363220.1"/>
</dbReference>
<dbReference type="RefSeq" id="NP_001350150.1">
    <molecule id="Q32M21-2"/>
    <property type="nucleotide sequence ID" value="NM_001363221.1"/>
</dbReference>
<dbReference type="RefSeq" id="NP_084003.2">
    <molecule id="Q32M21-1"/>
    <property type="nucleotide sequence ID" value="NM_029727.3"/>
</dbReference>
<dbReference type="RefSeq" id="XP_006534519.1">
    <property type="nucleotide sequence ID" value="XM_006534456.3"/>
</dbReference>
<dbReference type="SMR" id="Q32M21"/>
<dbReference type="FunCoup" id="Q32M21">
    <property type="interactions" value="3"/>
</dbReference>
<dbReference type="STRING" id="10090.ENSMUSP00000091470"/>
<dbReference type="GlyGen" id="Q32M21">
    <property type="glycosylation" value="1 site, 1 O-linked glycan (1 site)"/>
</dbReference>
<dbReference type="iPTMnet" id="Q32M21"/>
<dbReference type="PhosphoSitePlus" id="Q32M21"/>
<dbReference type="SwissPalm" id="Q32M21"/>
<dbReference type="PaxDb" id="10090-ENSMUSP00000091470"/>
<dbReference type="PeptideAtlas" id="Q32M21"/>
<dbReference type="ProteomicsDB" id="271442">
    <molecule id="Q32M21-1"/>
</dbReference>
<dbReference type="ProteomicsDB" id="271443">
    <molecule id="Q32M21-2"/>
</dbReference>
<dbReference type="ProteomicsDB" id="271444">
    <molecule id="Q32M21-3"/>
</dbReference>
<dbReference type="Ensembl" id="ENSMUST00000017355.12">
    <molecule id="Q32M21-2"/>
    <property type="protein sequence ID" value="ENSMUSP00000017355.6"/>
    <property type="gene ID" value="ENSMUSG00000017211.15"/>
</dbReference>
<dbReference type="Ensembl" id="ENSMUST00000093938.10">
    <molecule id="Q32M21-1"/>
    <property type="protein sequence ID" value="ENSMUSP00000091470.4"/>
    <property type="gene ID" value="ENSMUSG00000017211.15"/>
</dbReference>
<dbReference type="GeneID" id="76758"/>
<dbReference type="KEGG" id="mmu:76758"/>
<dbReference type="UCSC" id="uc007lgt.1">
    <molecule id="Q32M21-3"/>
    <property type="organism name" value="mouse"/>
</dbReference>
<dbReference type="UCSC" id="uc007lgu.1">
    <molecule id="Q32M21-1"/>
    <property type="organism name" value="mouse"/>
</dbReference>
<dbReference type="UCSC" id="uc011yef.1">
    <molecule id="Q32M21-2"/>
    <property type="organism name" value="mouse"/>
</dbReference>
<dbReference type="AGR" id="MGI:1921490"/>
<dbReference type="CTD" id="76758"/>
<dbReference type="MGI" id="MGI:1921490">
    <property type="gene designation" value="Gsdma2"/>
</dbReference>
<dbReference type="VEuPathDB" id="HostDB:ENSMUSG00000017211"/>
<dbReference type="eggNOG" id="ENOG502S0IQ">
    <property type="taxonomic scope" value="Eukaryota"/>
</dbReference>
<dbReference type="GeneTree" id="ENSGT00950000183140"/>
<dbReference type="HOGENOM" id="CLU_040752_0_0_1"/>
<dbReference type="InParanoid" id="Q32M21"/>
<dbReference type="OMA" id="LAYKVWD"/>
<dbReference type="OrthoDB" id="9944616at2759"/>
<dbReference type="PhylomeDB" id="Q32M21"/>
<dbReference type="TreeFam" id="TF331886"/>
<dbReference type="BioGRID-ORCS" id="76758">
    <property type="hits" value="0 hits in 79 CRISPR screens"/>
</dbReference>
<dbReference type="PRO" id="PR:Q32M21"/>
<dbReference type="Proteomes" id="UP000000589">
    <property type="component" value="Chromosome 11"/>
</dbReference>
<dbReference type="RNAct" id="Q32M21">
    <property type="molecule type" value="protein"/>
</dbReference>
<dbReference type="Bgee" id="ENSMUSG00000017211">
    <property type="expression patterns" value="Expressed in mucosa of stomach and 65 other cell types or tissues"/>
</dbReference>
<dbReference type="GO" id="GO:0005829">
    <property type="term" value="C:cytosol"/>
    <property type="evidence" value="ECO:0007669"/>
    <property type="project" value="UniProtKB-SubCell"/>
</dbReference>
<dbReference type="GO" id="GO:0048471">
    <property type="term" value="C:perinuclear region of cytoplasm"/>
    <property type="evidence" value="ECO:0007669"/>
    <property type="project" value="UniProtKB-SubCell"/>
</dbReference>
<dbReference type="GO" id="GO:0005886">
    <property type="term" value="C:plasma membrane"/>
    <property type="evidence" value="ECO:0007669"/>
    <property type="project" value="UniProtKB-SubCell"/>
</dbReference>
<dbReference type="GO" id="GO:0012501">
    <property type="term" value="P:programmed cell death"/>
    <property type="evidence" value="ECO:0007669"/>
    <property type="project" value="UniProtKB-KW"/>
</dbReference>
<dbReference type="InterPro" id="IPR007677">
    <property type="entry name" value="Gasdermin"/>
</dbReference>
<dbReference type="InterPro" id="IPR040460">
    <property type="entry name" value="Gasdermin_pore"/>
</dbReference>
<dbReference type="InterPro" id="IPR041263">
    <property type="entry name" value="Gasdermin_PUB"/>
</dbReference>
<dbReference type="PANTHER" id="PTHR16399">
    <property type="entry name" value="GASDERMIN"/>
    <property type="match status" value="1"/>
</dbReference>
<dbReference type="PANTHER" id="PTHR16399:SF18">
    <property type="entry name" value="GASDERMIN-A"/>
    <property type="match status" value="1"/>
</dbReference>
<dbReference type="Pfam" id="PF04598">
    <property type="entry name" value="Gasdermin"/>
    <property type="match status" value="1"/>
</dbReference>
<dbReference type="Pfam" id="PF17708">
    <property type="entry name" value="Gasdermin_C"/>
    <property type="match status" value="1"/>
</dbReference>
<gene>
    <name evidence="15" type="primary">Gsdma2</name>
    <name evidence="15" type="synonym">Gsdm2</name>
</gene>
<protein>
    <recommendedName>
        <fullName>Gasdermin-A2</fullName>
    </recommendedName>
    <alternativeName>
        <fullName>Gasdermin-2</fullName>
    </alternativeName>
    <component>
        <recommendedName>
            <fullName evidence="12">Gasdermin-A2, N-terminal</fullName>
            <shortName evidence="12">GSDMA2-NT</shortName>
        </recommendedName>
    </component>
    <component>
        <recommendedName>
            <fullName evidence="12">Gasdermin-A2, C-terminal</fullName>
            <shortName evidence="12">GSDMA2-CT</shortName>
        </recommendedName>
    </component>
</protein>
<keyword id="KW-0025">Alternative splicing</keyword>
<keyword id="KW-1003">Cell membrane</keyword>
<keyword id="KW-0175">Coiled coil</keyword>
<keyword id="KW-0963">Cytoplasm</keyword>
<keyword id="KW-0449">Lipoprotein</keyword>
<keyword id="KW-0472">Membrane</keyword>
<keyword id="KW-1210">Necrosis</keyword>
<keyword id="KW-0564">Palmitate</keyword>
<keyword id="KW-1185">Reference proteome</keyword>
<keyword id="KW-0812">Transmembrane</keyword>
<keyword id="KW-1134">Transmembrane beta strand</keyword>
<reference evidence="12 14" key="1">
    <citation type="journal article" date="2005" name="Science">
        <title>The transcriptional landscape of the mammalian genome.</title>
        <authorList>
            <person name="Carninci P."/>
            <person name="Kasukawa T."/>
            <person name="Katayama S."/>
            <person name="Gough J."/>
            <person name="Frith M.C."/>
            <person name="Maeda N."/>
            <person name="Oyama R."/>
            <person name="Ravasi T."/>
            <person name="Lenhard B."/>
            <person name="Wells C."/>
            <person name="Kodzius R."/>
            <person name="Shimokawa K."/>
            <person name="Bajic V.B."/>
            <person name="Brenner S.E."/>
            <person name="Batalov S."/>
            <person name="Forrest A.R."/>
            <person name="Zavolan M."/>
            <person name="Davis M.J."/>
            <person name="Wilming L.G."/>
            <person name="Aidinis V."/>
            <person name="Allen J.E."/>
            <person name="Ambesi-Impiombato A."/>
            <person name="Apweiler R."/>
            <person name="Aturaliya R.N."/>
            <person name="Bailey T.L."/>
            <person name="Bansal M."/>
            <person name="Baxter L."/>
            <person name="Beisel K.W."/>
            <person name="Bersano T."/>
            <person name="Bono H."/>
            <person name="Chalk A.M."/>
            <person name="Chiu K.P."/>
            <person name="Choudhary V."/>
            <person name="Christoffels A."/>
            <person name="Clutterbuck D.R."/>
            <person name="Crowe M.L."/>
            <person name="Dalla E."/>
            <person name="Dalrymple B.P."/>
            <person name="de Bono B."/>
            <person name="Della Gatta G."/>
            <person name="di Bernardo D."/>
            <person name="Down T."/>
            <person name="Engstrom P."/>
            <person name="Fagiolini M."/>
            <person name="Faulkner G."/>
            <person name="Fletcher C.F."/>
            <person name="Fukushima T."/>
            <person name="Furuno M."/>
            <person name="Futaki S."/>
            <person name="Gariboldi M."/>
            <person name="Georgii-Hemming P."/>
            <person name="Gingeras T.R."/>
            <person name="Gojobori T."/>
            <person name="Green R.E."/>
            <person name="Gustincich S."/>
            <person name="Harbers M."/>
            <person name="Hayashi Y."/>
            <person name="Hensch T.K."/>
            <person name="Hirokawa N."/>
            <person name="Hill D."/>
            <person name="Huminiecki L."/>
            <person name="Iacono M."/>
            <person name="Ikeo K."/>
            <person name="Iwama A."/>
            <person name="Ishikawa T."/>
            <person name="Jakt M."/>
            <person name="Kanapin A."/>
            <person name="Katoh M."/>
            <person name="Kawasawa Y."/>
            <person name="Kelso J."/>
            <person name="Kitamura H."/>
            <person name="Kitano H."/>
            <person name="Kollias G."/>
            <person name="Krishnan S.P."/>
            <person name="Kruger A."/>
            <person name="Kummerfeld S.K."/>
            <person name="Kurochkin I.V."/>
            <person name="Lareau L.F."/>
            <person name="Lazarevic D."/>
            <person name="Lipovich L."/>
            <person name="Liu J."/>
            <person name="Liuni S."/>
            <person name="McWilliam S."/>
            <person name="Madan Babu M."/>
            <person name="Madera M."/>
            <person name="Marchionni L."/>
            <person name="Matsuda H."/>
            <person name="Matsuzawa S."/>
            <person name="Miki H."/>
            <person name="Mignone F."/>
            <person name="Miyake S."/>
            <person name="Morris K."/>
            <person name="Mottagui-Tabar S."/>
            <person name="Mulder N."/>
            <person name="Nakano N."/>
            <person name="Nakauchi H."/>
            <person name="Ng P."/>
            <person name="Nilsson R."/>
            <person name="Nishiguchi S."/>
            <person name="Nishikawa S."/>
            <person name="Nori F."/>
            <person name="Ohara O."/>
            <person name="Okazaki Y."/>
            <person name="Orlando V."/>
            <person name="Pang K.C."/>
            <person name="Pavan W.J."/>
            <person name="Pavesi G."/>
            <person name="Pesole G."/>
            <person name="Petrovsky N."/>
            <person name="Piazza S."/>
            <person name="Reed J."/>
            <person name="Reid J.F."/>
            <person name="Ring B.Z."/>
            <person name="Ringwald M."/>
            <person name="Rost B."/>
            <person name="Ruan Y."/>
            <person name="Salzberg S.L."/>
            <person name="Sandelin A."/>
            <person name="Schneider C."/>
            <person name="Schoenbach C."/>
            <person name="Sekiguchi K."/>
            <person name="Semple C.A."/>
            <person name="Seno S."/>
            <person name="Sessa L."/>
            <person name="Sheng Y."/>
            <person name="Shibata Y."/>
            <person name="Shimada H."/>
            <person name="Shimada K."/>
            <person name="Silva D."/>
            <person name="Sinclair B."/>
            <person name="Sperling S."/>
            <person name="Stupka E."/>
            <person name="Sugiura K."/>
            <person name="Sultana R."/>
            <person name="Takenaka Y."/>
            <person name="Taki K."/>
            <person name="Tammoja K."/>
            <person name="Tan S.L."/>
            <person name="Tang S."/>
            <person name="Taylor M.S."/>
            <person name="Tegner J."/>
            <person name="Teichmann S.A."/>
            <person name="Ueda H.R."/>
            <person name="van Nimwegen E."/>
            <person name="Verardo R."/>
            <person name="Wei C.L."/>
            <person name="Yagi K."/>
            <person name="Yamanishi H."/>
            <person name="Zabarovsky E."/>
            <person name="Zhu S."/>
            <person name="Zimmer A."/>
            <person name="Hide W."/>
            <person name="Bult C."/>
            <person name="Grimmond S.M."/>
            <person name="Teasdale R.D."/>
            <person name="Liu E.T."/>
            <person name="Brusic V."/>
            <person name="Quackenbush J."/>
            <person name="Wahlestedt C."/>
            <person name="Mattick J.S."/>
            <person name="Hume D.A."/>
            <person name="Kai C."/>
            <person name="Sasaki D."/>
            <person name="Tomaru Y."/>
            <person name="Fukuda S."/>
            <person name="Kanamori-Katayama M."/>
            <person name="Suzuki M."/>
            <person name="Aoki J."/>
            <person name="Arakawa T."/>
            <person name="Iida J."/>
            <person name="Imamura K."/>
            <person name="Itoh M."/>
            <person name="Kato T."/>
            <person name="Kawaji H."/>
            <person name="Kawagashira N."/>
            <person name="Kawashima T."/>
            <person name="Kojima M."/>
            <person name="Kondo S."/>
            <person name="Konno H."/>
            <person name="Nakano K."/>
            <person name="Ninomiya N."/>
            <person name="Nishio T."/>
            <person name="Okada M."/>
            <person name="Plessy C."/>
            <person name="Shibata K."/>
            <person name="Shiraki T."/>
            <person name="Suzuki S."/>
            <person name="Tagami M."/>
            <person name="Waki K."/>
            <person name="Watahiki A."/>
            <person name="Okamura-Oho Y."/>
            <person name="Suzuki H."/>
            <person name="Kawai J."/>
            <person name="Hayashizaki Y."/>
        </authorList>
    </citation>
    <scope>NUCLEOTIDE SEQUENCE [LARGE SCALE MRNA] (ISOFORMS 2 AND 3)</scope>
    <source>
        <strain evidence="14">C57BL/6J</strain>
        <tissue evidence="14">Stomach</tissue>
    </source>
</reference>
<reference key="2">
    <citation type="journal article" date="2009" name="PLoS Biol.">
        <title>Lineage-specific biology revealed by a finished genome assembly of the mouse.</title>
        <authorList>
            <person name="Church D.M."/>
            <person name="Goodstadt L."/>
            <person name="Hillier L.W."/>
            <person name="Zody M.C."/>
            <person name="Goldstein S."/>
            <person name="She X."/>
            <person name="Bult C.J."/>
            <person name="Agarwala R."/>
            <person name="Cherry J.L."/>
            <person name="DiCuccio M."/>
            <person name="Hlavina W."/>
            <person name="Kapustin Y."/>
            <person name="Meric P."/>
            <person name="Maglott D."/>
            <person name="Birtle Z."/>
            <person name="Marques A.C."/>
            <person name="Graves T."/>
            <person name="Zhou S."/>
            <person name="Teague B."/>
            <person name="Potamousis K."/>
            <person name="Churas C."/>
            <person name="Place M."/>
            <person name="Herschleb J."/>
            <person name="Runnheim R."/>
            <person name="Forrest D."/>
            <person name="Amos-Landgraf J."/>
            <person name="Schwartz D.C."/>
            <person name="Cheng Z."/>
            <person name="Lindblad-Toh K."/>
            <person name="Eichler E.E."/>
            <person name="Ponting C.P."/>
        </authorList>
    </citation>
    <scope>NUCLEOTIDE SEQUENCE [LARGE SCALE GENOMIC DNA]</scope>
    <source>
        <strain>C57BL/6J</strain>
    </source>
</reference>
<reference evidence="12 13" key="3">
    <citation type="journal article" date="2004" name="Genome Res.">
        <title>The status, quality, and expansion of the NIH full-length cDNA project: the Mammalian Gene Collection (MGC).</title>
        <authorList>
            <consortium name="The MGC Project Team"/>
        </authorList>
    </citation>
    <scope>NUCLEOTIDE SEQUENCE [LARGE SCALE MRNA] (ISOFORM 1)</scope>
</reference>
<reference evidence="12" key="4">
    <citation type="journal article" date="2007" name="Genomics">
        <title>Members of a novel gene family, Gsdm, are expressed exclusively in the epithelium of the skin and gastrointestinal tract in a highly tissue-specific manner.</title>
        <authorList>
            <person name="Tamura M."/>
            <person name="Tanaka S."/>
            <person name="Fujii T."/>
            <person name="Aoki A."/>
            <person name="Komiyama H."/>
            <person name="Ezawa K."/>
            <person name="Sumiyama K."/>
            <person name="Sagai T."/>
            <person name="Shiroishi T."/>
        </authorList>
    </citation>
    <scope>TISSUE SPECIFICITY</scope>
    <scope>DEVELOPMENTAL STAGE</scope>
</reference>
<reference key="5">
    <citation type="journal article" date="2022" name="Nature">
        <title>Streptococcal pyrogenic exotoxin B cleaves GSDMA and triggers pyroptosis.</title>
        <authorList>
            <person name="Deng W."/>
            <person name="Bai Y."/>
            <person name="Deng F."/>
            <person name="Pan Y."/>
            <person name="Mei S."/>
            <person name="Zheng Z."/>
            <person name="Min R."/>
            <person name="Wu Z."/>
            <person name="Li W."/>
            <person name="Miao R."/>
            <person name="Zhang Z."/>
            <person name="Kupper T.S."/>
            <person name="Lieberman J."/>
            <person name="Liu X."/>
        </authorList>
    </citation>
    <scope>LACK OF PROTEOLYTIC CLEAVAGE BY SPEB</scope>
</reference>
<reference key="6">
    <citation type="journal article" date="2022" name="Nature">
        <title>Group A Streptococcus induces GSDMA-dependent pyroptosis in keratinocytes.</title>
        <authorList>
            <person name="LaRock D.L."/>
            <person name="Johnson A.F."/>
            <person name="Wilde S."/>
            <person name="Sands J.S."/>
            <person name="Monteiro M.P."/>
            <person name="LaRock C.N."/>
        </authorList>
    </citation>
    <scope>DISRUPTION PHENOTYPE</scope>
</reference>
<name>GSDA2_MOUSE</name>
<sequence length="443" mass="49844">MSMFEDVTRALARQLNPRGDLTPLDSLIDFKRFHPFCLVLRKRKSTLFWGARYVRTDYTLLDVLEPGSSPSDPTLLGNFSFKNMLDVRVEGDVEVPTMMKVKGTVGLSQSSTLEVQMLSVAPTALENLHMERKLSADHPFLKEMREYKQNLYVVMEVVKAKQEVTLKRASNAISKFSLNLPSLGLQGSVNHKEAVTIPKGCVLAYRVRQLIIYGKDEWGIPYICTDNMPTFNPLCVLQRQGSTVQMISGEMHEDFKTLKKEVQQETQEVEKLSPVGRSSLLTSLSHLLGKKKELQDLEQMLEGALDKGHEVTLEALPKDVLLLKDAMDAILYFLGALTELSEEQLKILVKSLENKVLPVQLKLVESILEQNFLQDKEDVFPLRPDLLSSLGEEDQILTEALVGLSGLEVQRSGPQYTWNPDTCHNLCALYAGLSLLHLLSRDS</sequence>
<proteinExistence type="evidence at protein level"/>
<feature type="chain" id="PRO_0000347271" description="Gasdermin-A2">
    <location>
        <begin position="1"/>
        <end position="443"/>
    </location>
</feature>
<feature type="chain" id="PRO_0000451668" description="Gasdermin-A2, N-terminal" evidence="12">
    <location>
        <begin position="1"/>
        <end status="unknown"/>
    </location>
</feature>
<feature type="chain" id="PRO_0000451669" description="Gasdermin-A2, C-terminal" evidence="12">
    <location>
        <begin status="unknown"/>
        <end position="443"/>
    </location>
</feature>
<feature type="transmembrane region" description="Beta stranded" evidence="2">
    <location>
        <begin position="78"/>
        <end position="95"/>
    </location>
</feature>
<feature type="transmembrane region" description="Beta stranded" evidence="2">
    <location>
        <begin position="99"/>
        <end position="120"/>
    </location>
</feature>
<feature type="transmembrane region" description="Beta stranded" evidence="2">
    <location>
        <begin position="164"/>
        <end position="179"/>
    </location>
</feature>
<feature type="transmembrane region" description="Beta stranded" evidence="2">
    <location>
        <begin position="183"/>
        <end position="197"/>
    </location>
</feature>
<feature type="region of interest" description="Triggers pyroptosis" evidence="3">
    <location>
        <begin position="1"/>
        <end position="249"/>
    </location>
</feature>
<feature type="coiled-coil region" evidence="5">
    <location>
        <begin position="249"/>
        <end position="312"/>
    </location>
</feature>
<feature type="binding site" evidence="2">
    <location>
        <begin position="9"/>
        <end position="13"/>
    </location>
    <ligand>
        <name>a cardiolipin</name>
        <dbReference type="ChEBI" id="CHEBI:62237"/>
    </ligand>
</feature>
<feature type="splice variant" id="VSP_052880" description="In isoform 2." evidence="11">
    <location>
        <begin position="1"/>
        <end position="167"/>
    </location>
</feature>
<feature type="splice variant" id="VSP_052881" description="In isoform 3." evidence="11">
    <location>
        <begin position="133"/>
        <end position="443"/>
    </location>
</feature>
<feature type="splice variant" id="VSP_052882" description="In isoform 2." evidence="11">
    <original>RASNAISKFSLNLPSLGL</original>
    <variation>MCAPTTLSWMCWSRAAPP</variation>
    <location>
        <begin position="168"/>
        <end position="185"/>
    </location>
</feature>
<accession>Q32M21</accession>
<accession>Q8CF01</accession>
<accession>Q9D810</accession>
<comment type="function">
    <molecule>Gasdermin-A2</molecule>
    <text evidence="4">This form constitutes the precursor of the pore-forming protein and acts as a sensor of infection: upon bacterial infection, specifically cleaved by some bacterial effector protein, releasing the N-terminal moiety (Gasdermin-A2, N-terminal) that binds to membranes and forms pores, triggering pyroptosis.</text>
</comment>
<comment type="function">
    <molecule>Gasdermin-A2, N-terminal</molecule>
    <text evidence="3">Pore-forming protein that causes membrane permeabilization and pyroptosis. Released upon cleavage of Gasdermin-A2, and binds to membrane inner leaflet lipids. Homooligomerizes within the membrane and forms pores of 10-15 nanometers (nm) of inner diameter, triggering pyroptosis. Binds to membrane inner leaflet lipids, such as phosphatidylinositol (4,5)-bisphosphate.</text>
</comment>
<comment type="activity regulation">
    <molecule>Gasdermin-A2</molecule>
    <text evidence="2">The full-length protein before cleavage is inactive: intramolecular interactions between N- and C-terminal domains mediate autoinhibition in the absence of activation signal. The intrinsic pyroptosis-inducing activity is carried by the released N-terminal moiety (Gasdermin-A2, N-terminal).</text>
</comment>
<comment type="subunit">
    <molecule>Gasdermin-A2, N-terminal</molecule>
    <text evidence="2">Homooligomer; homooligomeric ring-shaped pore complex containing 18-36 subunits when inserted in the membrane.</text>
</comment>
<comment type="subcellular location">
    <molecule>Gasdermin-A2</molecule>
    <subcellularLocation>
        <location evidence="3">Cytoplasm</location>
        <location evidence="3">Perinuclear region</location>
    </subcellularLocation>
    <subcellularLocation>
        <location evidence="2">Cytoplasm</location>
        <location evidence="2">Cytosol</location>
    </subcellularLocation>
</comment>
<comment type="subcellular location">
    <molecule>Gasdermin-A2, N-terminal</molecule>
    <subcellularLocation>
        <location evidence="2">Cell membrane</location>
        <topology evidence="2">Multi-pass membrane protein</topology>
    </subcellularLocation>
</comment>
<comment type="alternative products">
    <event type="alternative splicing"/>
    <isoform>
        <id>Q32M21-1</id>
        <name evidence="6">1</name>
        <sequence type="displayed"/>
    </isoform>
    <isoform>
        <id>Q32M21-2</id>
        <name evidence="7">2</name>
        <sequence type="described" ref="VSP_052880 VSP_052882"/>
    </isoform>
    <isoform>
        <id>Q32M21-3</id>
        <name evidence="7">3</name>
        <sequence type="described" ref="VSP_052881"/>
    </isoform>
</comment>
<comment type="tissue specificity">
    <text evidence="8">Expressed in the gastrointestinal tract, specifically from the middle to the upper region of the gastric mucosa in the glandular stomach.</text>
</comment>
<comment type="developmental stage">
    <text evidence="8">Expression is first detected at 16.6-17.5 dpc.</text>
</comment>
<comment type="domain">
    <text evidence="2">Intramolecular interactions between N- and C-terminal domains are important for autoinhibition in the absence of activation signal. The intrinsic pyroptosis-inducing activity is carried by the N-terminal domain.</text>
</comment>
<comment type="PTM">
    <text evidence="1 9">Cleavage relieves autoinhibition by releasing the N-terminal moiety (Gasdermin-A2, N-terminal) that initiates pyroptosis (By similarity). In contrast to Gsdma, not cleaved by bacterial effector protein SpeB (PubMed:35110732).</text>
</comment>
<comment type="PTM">
    <text evidence="3">Palmitoylated.</text>
</comment>
<comment type="disruption phenotype">
    <text evidence="10">Mice lacking Gsdma, Gsdma2 and Gsdma3 are highly susceptible to subcutaneous group A Streptococcus (GAS) infection in an animal model.</text>
</comment>
<comment type="similarity">
    <text evidence="12">Belongs to the gasdermin family.</text>
</comment>
<evidence type="ECO:0000250" key="1">
    <source>
        <dbReference type="UniProtKB" id="P57764"/>
    </source>
</evidence>
<evidence type="ECO:0000250" key="2">
    <source>
        <dbReference type="UniProtKB" id="Q5Y4Y6"/>
    </source>
</evidence>
<evidence type="ECO:0000250" key="3">
    <source>
        <dbReference type="UniProtKB" id="Q96QA5"/>
    </source>
</evidence>
<evidence type="ECO:0000250" key="4">
    <source>
        <dbReference type="UniProtKB" id="Q9EST1"/>
    </source>
</evidence>
<evidence type="ECO:0000255" key="5"/>
<evidence type="ECO:0000269" key="6">
    <source>
    </source>
</evidence>
<evidence type="ECO:0000269" key="7">
    <source>
    </source>
</evidence>
<evidence type="ECO:0000269" key="8">
    <source>
    </source>
</evidence>
<evidence type="ECO:0000269" key="9">
    <source>
    </source>
</evidence>
<evidence type="ECO:0000269" key="10">
    <source>
    </source>
</evidence>
<evidence type="ECO:0000303" key="11">
    <source>
    </source>
</evidence>
<evidence type="ECO:0000305" key="12"/>
<evidence type="ECO:0000312" key="13">
    <source>
        <dbReference type="EMBL" id="AAI09336.1"/>
    </source>
</evidence>
<evidence type="ECO:0000312" key="14">
    <source>
        <dbReference type="EMBL" id="BAB25778.1"/>
    </source>
</evidence>
<evidence type="ECO:0000312" key="15">
    <source>
        <dbReference type="MGI" id="MGI:1921490"/>
    </source>
</evidence>
<organism>
    <name type="scientific">Mus musculus</name>
    <name type="common">Mouse</name>
    <dbReference type="NCBI Taxonomy" id="10090"/>
    <lineage>
        <taxon>Eukaryota</taxon>
        <taxon>Metazoa</taxon>
        <taxon>Chordata</taxon>
        <taxon>Craniata</taxon>
        <taxon>Vertebrata</taxon>
        <taxon>Euteleostomi</taxon>
        <taxon>Mammalia</taxon>
        <taxon>Eutheria</taxon>
        <taxon>Euarchontoglires</taxon>
        <taxon>Glires</taxon>
        <taxon>Rodentia</taxon>
        <taxon>Myomorpha</taxon>
        <taxon>Muroidea</taxon>
        <taxon>Muridae</taxon>
        <taxon>Murinae</taxon>
        <taxon>Mus</taxon>
        <taxon>Mus</taxon>
    </lineage>
</organism>